<gene>
    <name evidence="1" type="primary">menD</name>
    <name type="ordered locus">Ava_4706</name>
</gene>
<reference key="1">
    <citation type="journal article" date="2014" name="Stand. Genomic Sci.">
        <title>Complete genome sequence of Anabaena variabilis ATCC 29413.</title>
        <authorList>
            <person name="Thiel T."/>
            <person name="Pratte B.S."/>
            <person name="Zhong J."/>
            <person name="Goodwin L."/>
            <person name="Copeland A."/>
            <person name="Lucas S."/>
            <person name="Han C."/>
            <person name="Pitluck S."/>
            <person name="Land M.L."/>
            <person name="Kyrpides N.C."/>
            <person name="Woyke T."/>
        </authorList>
    </citation>
    <scope>NUCLEOTIDE SEQUENCE [LARGE SCALE GENOMIC DNA]</scope>
    <source>
        <strain>ATCC 29413 / PCC 7937</strain>
    </source>
</reference>
<evidence type="ECO:0000255" key="1">
    <source>
        <dbReference type="HAMAP-Rule" id="MF_01659"/>
    </source>
</evidence>
<evidence type="ECO:0000305" key="2"/>
<accession>Q3M3Y3</accession>
<organism>
    <name type="scientific">Trichormus variabilis (strain ATCC 29413 / PCC 7937)</name>
    <name type="common">Anabaena variabilis</name>
    <dbReference type="NCBI Taxonomy" id="240292"/>
    <lineage>
        <taxon>Bacteria</taxon>
        <taxon>Bacillati</taxon>
        <taxon>Cyanobacteriota</taxon>
        <taxon>Cyanophyceae</taxon>
        <taxon>Nostocales</taxon>
        <taxon>Nostocaceae</taxon>
        <taxon>Trichormus</taxon>
    </lineage>
</organism>
<protein>
    <recommendedName>
        <fullName evidence="1">2-succinyl-5-enolpyruvyl-6-hydroxy-3-cyclohexene-1-carboxylate synthase</fullName>
        <shortName evidence="1">SEPHCHC synthase</shortName>
        <ecNumber evidence="1">2.2.1.9</ecNumber>
    </recommendedName>
</protein>
<sequence>MPIAYKNINQLWAYVFTETLKRLGLAYAVICPGSRSTPLAVAFAQQAPDIEGISILDERSAAFFALGLAKATNRPVAIVCTSGTAGANFYPAVIEAQESRVPLLLLTADRPPELRDCHSGQTIDQVKLFGSYPNWQTELALPVSDMGMLGYLRQTVIHSWYRMQAPTPGPVHLNIPFRDPLAPIPDGADLSYLLTKFHPEEFFAGITDTTSLPDHSQLSIPPEWLKSQRGIIIAGVAQPQQPQEYCRAIARLSQTLQWPVLAEGLSPIRNYADLNPYLISTYDLILRNQQLATRLAPDMVIQIGDMPTSKELRTWIDTHQPRRWVIDPSDQNLDPLHGRTTHLRIRVEELGCKGVEEDKSSVSEYLQLWCNAETKVRVNVDETLDKMEDLVECKAAWLLSQILPPETPLFIANSMPVRDVEFFWKPNNLRVRSHFNRGANGIDGTLSTALGIAHRHQSSVLITGDLALLHDTNGFLIRNKFVGHLTIILINNNGGGIFEMLPIAKFEPPFEEFFGTPQDIDFAQLCTTYNVQHELIHSWVHLQQRLNPLPNTGIRVLELRTNRKIDAQWRRDNLSNFAADNII</sequence>
<feature type="chain" id="PRO_0000341700" description="2-succinyl-5-enolpyruvyl-6-hydroxy-3-cyclohexene-1-carboxylate synthase">
    <location>
        <begin position="1"/>
        <end position="583"/>
    </location>
</feature>
<comment type="function">
    <text evidence="1">Catalyzes the thiamine diphosphate-dependent decarboxylation of 2-oxoglutarate and the subsequent addition of the resulting succinic semialdehyde-thiamine pyrophosphate anion to isochorismate to yield 2-succinyl-5-enolpyruvyl-6-hydroxy-3-cyclohexene-1-carboxylate (SEPHCHC).</text>
</comment>
<comment type="catalytic activity">
    <reaction evidence="1">
        <text>isochorismate + 2-oxoglutarate + H(+) = 5-enolpyruvoyl-6-hydroxy-2-succinyl-cyclohex-3-ene-1-carboxylate + CO2</text>
        <dbReference type="Rhea" id="RHEA:25593"/>
        <dbReference type="ChEBI" id="CHEBI:15378"/>
        <dbReference type="ChEBI" id="CHEBI:16526"/>
        <dbReference type="ChEBI" id="CHEBI:16810"/>
        <dbReference type="ChEBI" id="CHEBI:29780"/>
        <dbReference type="ChEBI" id="CHEBI:58818"/>
        <dbReference type="EC" id="2.2.1.9"/>
    </reaction>
</comment>
<comment type="cofactor">
    <cofactor evidence="1">
        <name>Mg(2+)</name>
        <dbReference type="ChEBI" id="CHEBI:18420"/>
    </cofactor>
    <cofactor evidence="1">
        <name>Mn(2+)</name>
        <dbReference type="ChEBI" id="CHEBI:29035"/>
    </cofactor>
</comment>
<comment type="cofactor">
    <cofactor evidence="1">
        <name>thiamine diphosphate</name>
        <dbReference type="ChEBI" id="CHEBI:58937"/>
    </cofactor>
    <text evidence="1">Binds 1 thiamine pyrophosphate per subunit.</text>
</comment>
<comment type="pathway">
    <text evidence="1">Quinol/quinone metabolism; 1,4-dihydroxy-2-naphthoate biosynthesis; 1,4-dihydroxy-2-naphthoate from chorismate: step 2/7.</text>
</comment>
<comment type="pathway">
    <text evidence="1">Cofactor biosynthesis; phylloquinone biosynthesis.</text>
</comment>
<comment type="subunit">
    <text evidence="1">Homodimer.</text>
</comment>
<comment type="similarity">
    <text evidence="1">Belongs to the TPP enzyme family. MenD subfamily.</text>
</comment>
<comment type="sequence caution" evidence="2">
    <conflict type="erroneous initiation">
        <sequence resource="EMBL-CDS" id="ABA24303"/>
    </conflict>
</comment>
<proteinExistence type="inferred from homology"/>
<name>MEND_TRIV2</name>
<keyword id="KW-0460">Magnesium</keyword>
<keyword id="KW-0464">Manganese</keyword>
<keyword id="KW-0479">Metal-binding</keyword>
<keyword id="KW-0786">Thiamine pyrophosphate</keyword>
<keyword id="KW-0808">Transferase</keyword>
<dbReference type="EC" id="2.2.1.9" evidence="1"/>
<dbReference type="EMBL" id="CP000117">
    <property type="protein sequence ID" value="ABA24303.1"/>
    <property type="status" value="ALT_INIT"/>
    <property type="molecule type" value="Genomic_DNA"/>
</dbReference>
<dbReference type="SMR" id="Q3M3Y3"/>
<dbReference type="STRING" id="240292.Ava_4706"/>
<dbReference type="KEGG" id="ava:Ava_4706"/>
<dbReference type="eggNOG" id="COG1165">
    <property type="taxonomic scope" value="Bacteria"/>
</dbReference>
<dbReference type="HOGENOM" id="CLU_006051_3_0_3"/>
<dbReference type="UniPathway" id="UPA00995"/>
<dbReference type="UniPathway" id="UPA01057">
    <property type="reaction ID" value="UER00164"/>
</dbReference>
<dbReference type="Proteomes" id="UP000002533">
    <property type="component" value="Chromosome"/>
</dbReference>
<dbReference type="GO" id="GO:0070204">
    <property type="term" value="F:2-succinyl-5-enolpyruvyl-6-hydroxy-3-cyclohexene-1-carboxylic-acid synthase activity"/>
    <property type="evidence" value="ECO:0007669"/>
    <property type="project" value="UniProtKB-UniRule"/>
</dbReference>
<dbReference type="GO" id="GO:0000287">
    <property type="term" value="F:magnesium ion binding"/>
    <property type="evidence" value="ECO:0007669"/>
    <property type="project" value="UniProtKB-UniRule"/>
</dbReference>
<dbReference type="GO" id="GO:0030145">
    <property type="term" value="F:manganese ion binding"/>
    <property type="evidence" value="ECO:0007669"/>
    <property type="project" value="UniProtKB-UniRule"/>
</dbReference>
<dbReference type="GO" id="GO:0030976">
    <property type="term" value="F:thiamine pyrophosphate binding"/>
    <property type="evidence" value="ECO:0007669"/>
    <property type="project" value="UniProtKB-UniRule"/>
</dbReference>
<dbReference type="GO" id="GO:0009234">
    <property type="term" value="P:menaquinone biosynthetic process"/>
    <property type="evidence" value="ECO:0007669"/>
    <property type="project" value="InterPro"/>
</dbReference>
<dbReference type="GO" id="GO:0042372">
    <property type="term" value="P:phylloquinone biosynthetic process"/>
    <property type="evidence" value="ECO:0007669"/>
    <property type="project" value="UniProtKB-UniRule"/>
</dbReference>
<dbReference type="CDD" id="cd07037">
    <property type="entry name" value="TPP_PYR_MenD"/>
    <property type="match status" value="1"/>
</dbReference>
<dbReference type="CDD" id="cd02009">
    <property type="entry name" value="TPP_SHCHC_synthase"/>
    <property type="match status" value="1"/>
</dbReference>
<dbReference type="Gene3D" id="3.40.50.970">
    <property type="match status" value="2"/>
</dbReference>
<dbReference type="Gene3D" id="3.40.50.1220">
    <property type="entry name" value="TPP-binding domain"/>
    <property type="match status" value="1"/>
</dbReference>
<dbReference type="HAMAP" id="MF_01659">
    <property type="entry name" value="MenD"/>
    <property type="match status" value="1"/>
</dbReference>
<dbReference type="InterPro" id="IPR004433">
    <property type="entry name" value="MenaQ_synth_MenD"/>
</dbReference>
<dbReference type="InterPro" id="IPR032264">
    <property type="entry name" value="MenD_middle"/>
</dbReference>
<dbReference type="InterPro" id="IPR029061">
    <property type="entry name" value="THDP-binding"/>
</dbReference>
<dbReference type="InterPro" id="IPR012001">
    <property type="entry name" value="Thiamin_PyroP_enz_TPP-bd_dom"/>
</dbReference>
<dbReference type="NCBIfam" id="TIGR00173">
    <property type="entry name" value="menD"/>
    <property type="match status" value="1"/>
</dbReference>
<dbReference type="PANTHER" id="PTHR42916">
    <property type="entry name" value="2-SUCCINYL-5-ENOLPYRUVYL-6-HYDROXY-3-CYCLOHEXENE-1-CARBOXYLATE SYNTHASE"/>
    <property type="match status" value="1"/>
</dbReference>
<dbReference type="PANTHER" id="PTHR42916:SF1">
    <property type="entry name" value="PROTEIN PHYLLO, CHLOROPLASTIC"/>
    <property type="match status" value="1"/>
</dbReference>
<dbReference type="Pfam" id="PF16582">
    <property type="entry name" value="TPP_enzyme_M_2"/>
    <property type="match status" value="1"/>
</dbReference>
<dbReference type="Pfam" id="PF02776">
    <property type="entry name" value="TPP_enzyme_N"/>
    <property type="match status" value="1"/>
</dbReference>
<dbReference type="PIRSF" id="PIRSF004983">
    <property type="entry name" value="MenD"/>
    <property type="match status" value="1"/>
</dbReference>
<dbReference type="SUPFAM" id="SSF52518">
    <property type="entry name" value="Thiamin diphosphate-binding fold (THDP-binding)"/>
    <property type="match status" value="2"/>
</dbReference>